<sequence>MNQIDAIEMAQMKKNIPKFIPGDTIKVQVKIVEGDKSRIQAFQGVCLGRQNGGIRESFTVRKISNGVGVERVFPLHSPSIEAIEVVTRGQVRRAKLYYLRKLRGKASRIKERKYVAGQ</sequence>
<organism>
    <name type="scientific">Citrifermentans bemidjiense (strain ATCC BAA-1014 / DSM 16622 / JCM 12645 / Bem)</name>
    <name type="common">Geobacter bemidjiensis</name>
    <dbReference type="NCBI Taxonomy" id="404380"/>
    <lineage>
        <taxon>Bacteria</taxon>
        <taxon>Pseudomonadati</taxon>
        <taxon>Thermodesulfobacteriota</taxon>
        <taxon>Desulfuromonadia</taxon>
        <taxon>Geobacterales</taxon>
        <taxon>Geobacteraceae</taxon>
        <taxon>Citrifermentans</taxon>
    </lineage>
</organism>
<proteinExistence type="inferred from homology"/>
<evidence type="ECO:0000255" key="1">
    <source>
        <dbReference type="HAMAP-Rule" id="MF_00402"/>
    </source>
</evidence>
<evidence type="ECO:0000305" key="2"/>
<name>RL19_CITBB</name>
<reference key="1">
    <citation type="submission" date="2008-07" db="EMBL/GenBank/DDBJ databases">
        <title>Complete sequence of Geobacter bemidjiensis BEM.</title>
        <authorList>
            <consortium name="US DOE Joint Genome Institute"/>
            <person name="Lucas S."/>
            <person name="Copeland A."/>
            <person name="Lapidus A."/>
            <person name="Glavina del Rio T."/>
            <person name="Dalin E."/>
            <person name="Tice H."/>
            <person name="Bruce D."/>
            <person name="Goodwin L."/>
            <person name="Pitluck S."/>
            <person name="Kiss H."/>
            <person name="Brettin T."/>
            <person name="Detter J.C."/>
            <person name="Han C."/>
            <person name="Kuske C.R."/>
            <person name="Schmutz J."/>
            <person name="Larimer F."/>
            <person name="Land M."/>
            <person name="Hauser L."/>
            <person name="Kyrpides N."/>
            <person name="Lykidis A."/>
            <person name="Lovley D."/>
            <person name="Richardson P."/>
        </authorList>
    </citation>
    <scope>NUCLEOTIDE SEQUENCE [LARGE SCALE GENOMIC DNA]</scope>
    <source>
        <strain>ATCC BAA-1014 / DSM 16622 / JCM 12645 / Bem</strain>
    </source>
</reference>
<feature type="chain" id="PRO_1000193845" description="Large ribosomal subunit protein bL19">
    <location>
        <begin position="1"/>
        <end position="118"/>
    </location>
</feature>
<keyword id="KW-1185">Reference proteome</keyword>
<keyword id="KW-0687">Ribonucleoprotein</keyword>
<keyword id="KW-0689">Ribosomal protein</keyword>
<gene>
    <name evidence="1" type="primary">rplS</name>
    <name type="ordered locus">Gbem_3426</name>
</gene>
<comment type="function">
    <text evidence="1">This protein is located at the 30S-50S ribosomal subunit interface and may play a role in the structure and function of the aminoacyl-tRNA binding site.</text>
</comment>
<comment type="similarity">
    <text evidence="1">Belongs to the bacterial ribosomal protein bL19 family.</text>
</comment>
<protein>
    <recommendedName>
        <fullName evidence="1">Large ribosomal subunit protein bL19</fullName>
    </recommendedName>
    <alternativeName>
        <fullName evidence="2">50S ribosomal protein L19</fullName>
    </alternativeName>
</protein>
<dbReference type="EMBL" id="CP001124">
    <property type="protein sequence ID" value="ACH40419.1"/>
    <property type="molecule type" value="Genomic_DNA"/>
</dbReference>
<dbReference type="RefSeq" id="WP_012531852.1">
    <property type="nucleotide sequence ID" value="NC_011146.1"/>
</dbReference>
<dbReference type="SMR" id="B5EBC7"/>
<dbReference type="STRING" id="404380.Gbem_3426"/>
<dbReference type="KEGG" id="gbm:Gbem_3426"/>
<dbReference type="eggNOG" id="COG0335">
    <property type="taxonomic scope" value="Bacteria"/>
</dbReference>
<dbReference type="HOGENOM" id="CLU_103507_2_1_7"/>
<dbReference type="OrthoDB" id="9803541at2"/>
<dbReference type="Proteomes" id="UP000008825">
    <property type="component" value="Chromosome"/>
</dbReference>
<dbReference type="GO" id="GO:0022625">
    <property type="term" value="C:cytosolic large ribosomal subunit"/>
    <property type="evidence" value="ECO:0007669"/>
    <property type="project" value="TreeGrafter"/>
</dbReference>
<dbReference type="GO" id="GO:0003735">
    <property type="term" value="F:structural constituent of ribosome"/>
    <property type="evidence" value="ECO:0007669"/>
    <property type="project" value="InterPro"/>
</dbReference>
<dbReference type="GO" id="GO:0006412">
    <property type="term" value="P:translation"/>
    <property type="evidence" value="ECO:0007669"/>
    <property type="project" value="UniProtKB-UniRule"/>
</dbReference>
<dbReference type="FunFam" id="2.30.30.790:FF:000001">
    <property type="entry name" value="50S ribosomal protein L19"/>
    <property type="match status" value="1"/>
</dbReference>
<dbReference type="Gene3D" id="2.30.30.790">
    <property type="match status" value="1"/>
</dbReference>
<dbReference type="HAMAP" id="MF_00402">
    <property type="entry name" value="Ribosomal_bL19"/>
    <property type="match status" value="1"/>
</dbReference>
<dbReference type="InterPro" id="IPR001857">
    <property type="entry name" value="Ribosomal_bL19"/>
</dbReference>
<dbReference type="InterPro" id="IPR018257">
    <property type="entry name" value="Ribosomal_bL19_CS"/>
</dbReference>
<dbReference type="InterPro" id="IPR038657">
    <property type="entry name" value="Ribosomal_bL19_sf"/>
</dbReference>
<dbReference type="InterPro" id="IPR008991">
    <property type="entry name" value="Translation_prot_SH3-like_sf"/>
</dbReference>
<dbReference type="NCBIfam" id="TIGR01024">
    <property type="entry name" value="rplS_bact"/>
    <property type="match status" value="1"/>
</dbReference>
<dbReference type="PANTHER" id="PTHR15680:SF9">
    <property type="entry name" value="LARGE RIBOSOMAL SUBUNIT PROTEIN BL19M"/>
    <property type="match status" value="1"/>
</dbReference>
<dbReference type="PANTHER" id="PTHR15680">
    <property type="entry name" value="RIBOSOMAL PROTEIN L19"/>
    <property type="match status" value="1"/>
</dbReference>
<dbReference type="Pfam" id="PF01245">
    <property type="entry name" value="Ribosomal_L19"/>
    <property type="match status" value="1"/>
</dbReference>
<dbReference type="PIRSF" id="PIRSF002191">
    <property type="entry name" value="Ribosomal_L19"/>
    <property type="match status" value="1"/>
</dbReference>
<dbReference type="PRINTS" id="PR00061">
    <property type="entry name" value="RIBOSOMALL19"/>
</dbReference>
<dbReference type="SUPFAM" id="SSF50104">
    <property type="entry name" value="Translation proteins SH3-like domain"/>
    <property type="match status" value="1"/>
</dbReference>
<dbReference type="PROSITE" id="PS01015">
    <property type="entry name" value="RIBOSOMAL_L19"/>
    <property type="match status" value="1"/>
</dbReference>
<accession>B5EBC7</accession>